<keyword id="KW-0997">Cell inner membrane</keyword>
<keyword id="KW-1003">Cell membrane</keyword>
<keyword id="KW-0407">Ion channel</keyword>
<keyword id="KW-0406">Ion transport</keyword>
<keyword id="KW-0472">Membrane</keyword>
<keyword id="KW-0479">Metal-binding</keyword>
<keyword id="KW-1185">Reference proteome</keyword>
<keyword id="KW-0915">Sodium</keyword>
<keyword id="KW-0812">Transmembrane</keyword>
<keyword id="KW-1133">Transmembrane helix</keyword>
<keyword id="KW-0813">Transport</keyword>
<feature type="chain" id="PRO_0000110034" description="Fluoride-specific ion channel FluC">
    <location>
        <begin position="1"/>
        <end position="125"/>
    </location>
</feature>
<feature type="transmembrane region" description="Helical" evidence="1">
    <location>
        <begin position="4"/>
        <end position="24"/>
    </location>
</feature>
<feature type="transmembrane region" description="Helical" evidence="1">
    <location>
        <begin position="35"/>
        <end position="55"/>
    </location>
</feature>
<feature type="transmembrane region" description="Helical" evidence="1">
    <location>
        <begin position="68"/>
        <end position="88"/>
    </location>
</feature>
<feature type="transmembrane region" description="Helical" evidence="1">
    <location>
        <begin position="100"/>
        <end position="120"/>
    </location>
</feature>
<feature type="binding site" evidence="1">
    <location>
        <position position="75"/>
    </location>
    <ligand>
        <name>Na(+)</name>
        <dbReference type="ChEBI" id="CHEBI:29101"/>
        <note>structural</note>
    </ligand>
</feature>
<feature type="binding site" evidence="1">
    <location>
        <position position="78"/>
    </location>
    <ligand>
        <name>Na(+)</name>
        <dbReference type="ChEBI" id="CHEBI:29101"/>
        <note>structural</note>
    </ligand>
</feature>
<accession>Q8UFC8</accession>
<protein>
    <recommendedName>
        <fullName evidence="1">Fluoride-specific ion channel FluC</fullName>
    </recommendedName>
</protein>
<sequence>MINIALVATGGAIGSVFRYLVGVWSMRLAGPNFPWGTLAVNIVGSFLIGLLVELVARRLNASIEMRLFLVTGVLGGFTTFSSFSLDAVSLFERGALGLSAFYILASLVVSIAAVFAGLALGRNLF</sequence>
<name>FLUC_AGRFC</name>
<evidence type="ECO:0000255" key="1">
    <source>
        <dbReference type="HAMAP-Rule" id="MF_00454"/>
    </source>
</evidence>
<organism>
    <name type="scientific">Agrobacterium fabrum (strain C58 / ATCC 33970)</name>
    <name type="common">Agrobacterium tumefaciens (strain C58)</name>
    <dbReference type="NCBI Taxonomy" id="176299"/>
    <lineage>
        <taxon>Bacteria</taxon>
        <taxon>Pseudomonadati</taxon>
        <taxon>Pseudomonadota</taxon>
        <taxon>Alphaproteobacteria</taxon>
        <taxon>Hyphomicrobiales</taxon>
        <taxon>Rhizobiaceae</taxon>
        <taxon>Rhizobium/Agrobacterium group</taxon>
        <taxon>Agrobacterium</taxon>
        <taxon>Agrobacterium tumefaciens complex</taxon>
    </lineage>
</organism>
<dbReference type="EMBL" id="AE007869">
    <property type="protein sequence ID" value="AAK87260.1"/>
    <property type="molecule type" value="Genomic_DNA"/>
</dbReference>
<dbReference type="PIR" id="AF2757">
    <property type="entry name" value="AF2757"/>
</dbReference>
<dbReference type="PIR" id="C97538">
    <property type="entry name" value="C97538"/>
</dbReference>
<dbReference type="RefSeq" id="NP_354475.1">
    <property type="nucleotide sequence ID" value="NC_003062.2"/>
</dbReference>
<dbReference type="RefSeq" id="WP_010971646.1">
    <property type="nucleotide sequence ID" value="NC_003062.2"/>
</dbReference>
<dbReference type="SMR" id="Q8UFC8"/>
<dbReference type="STRING" id="176299.Atu1470"/>
<dbReference type="EnsemblBacteria" id="AAK87260">
    <property type="protein sequence ID" value="AAK87260"/>
    <property type="gene ID" value="Atu1470"/>
</dbReference>
<dbReference type="GeneID" id="1133508"/>
<dbReference type="KEGG" id="atu:Atu1470"/>
<dbReference type="PATRIC" id="fig|176299.10.peg.1494"/>
<dbReference type="eggNOG" id="COG0239">
    <property type="taxonomic scope" value="Bacteria"/>
</dbReference>
<dbReference type="HOGENOM" id="CLU_114342_2_3_5"/>
<dbReference type="OrthoDB" id="9806299at2"/>
<dbReference type="PhylomeDB" id="Q8UFC8"/>
<dbReference type="BioCyc" id="AGRO:ATU1470-MONOMER"/>
<dbReference type="Proteomes" id="UP000000813">
    <property type="component" value="Chromosome circular"/>
</dbReference>
<dbReference type="GO" id="GO:0005886">
    <property type="term" value="C:plasma membrane"/>
    <property type="evidence" value="ECO:0007669"/>
    <property type="project" value="UniProtKB-SubCell"/>
</dbReference>
<dbReference type="GO" id="GO:0062054">
    <property type="term" value="F:fluoride channel activity"/>
    <property type="evidence" value="ECO:0007669"/>
    <property type="project" value="UniProtKB-UniRule"/>
</dbReference>
<dbReference type="GO" id="GO:0046872">
    <property type="term" value="F:metal ion binding"/>
    <property type="evidence" value="ECO:0007669"/>
    <property type="project" value="UniProtKB-KW"/>
</dbReference>
<dbReference type="GO" id="GO:0140114">
    <property type="term" value="P:cellular detoxification of fluoride"/>
    <property type="evidence" value="ECO:0007669"/>
    <property type="project" value="UniProtKB-UniRule"/>
</dbReference>
<dbReference type="HAMAP" id="MF_00454">
    <property type="entry name" value="FluC"/>
    <property type="match status" value="1"/>
</dbReference>
<dbReference type="InterPro" id="IPR003691">
    <property type="entry name" value="FluC"/>
</dbReference>
<dbReference type="NCBIfam" id="TIGR00494">
    <property type="entry name" value="crcB"/>
    <property type="match status" value="1"/>
</dbReference>
<dbReference type="NCBIfam" id="NF010791">
    <property type="entry name" value="PRK14195.1"/>
    <property type="match status" value="1"/>
</dbReference>
<dbReference type="PANTHER" id="PTHR28259">
    <property type="entry name" value="FLUORIDE EXPORT PROTEIN 1-RELATED"/>
    <property type="match status" value="1"/>
</dbReference>
<dbReference type="PANTHER" id="PTHR28259:SF18">
    <property type="entry name" value="FLUORIDE-SPECIFIC ION CHANNEL FLUC"/>
    <property type="match status" value="1"/>
</dbReference>
<dbReference type="Pfam" id="PF02537">
    <property type="entry name" value="CRCB"/>
    <property type="match status" value="1"/>
</dbReference>
<proteinExistence type="inferred from homology"/>
<reference key="1">
    <citation type="journal article" date="2001" name="Science">
        <title>The genome of the natural genetic engineer Agrobacterium tumefaciens C58.</title>
        <authorList>
            <person name="Wood D.W."/>
            <person name="Setubal J.C."/>
            <person name="Kaul R."/>
            <person name="Monks D.E."/>
            <person name="Kitajima J.P."/>
            <person name="Okura V.K."/>
            <person name="Zhou Y."/>
            <person name="Chen L."/>
            <person name="Wood G.E."/>
            <person name="Almeida N.F. Jr."/>
            <person name="Woo L."/>
            <person name="Chen Y."/>
            <person name="Paulsen I.T."/>
            <person name="Eisen J.A."/>
            <person name="Karp P.D."/>
            <person name="Bovee D. Sr."/>
            <person name="Chapman P."/>
            <person name="Clendenning J."/>
            <person name="Deatherage G."/>
            <person name="Gillet W."/>
            <person name="Grant C."/>
            <person name="Kutyavin T."/>
            <person name="Levy R."/>
            <person name="Li M.-J."/>
            <person name="McClelland E."/>
            <person name="Palmieri A."/>
            <person name="Raymond C."/>
            <person name="Rouse G."/>
            <person name="Saenphimmachak C."/>
            <person name="Wu Z."/>
            <person name="Romero P."/>
            <person name="Gordon D."/>
            <person name="Zhang S."/>
            <person name="Yoo H."/>
            <person name="Tao Y."/>
            <person name="Biddle P."/>
            <person name="Jung M."/>
            <person name="Krespan W."/>
            <person name="Perry M."/>
            <person name="Gordon-Kamm B."/>
            <person name="Liao L."/>
            <person name="Kim S."/>
            <person name="Hendrick C."/>
            <person name="Zhao Z.-Y."/>
            <person name="Dolan M."/>
            <person name="Chumley F."/>
            <person name="Tingey S.V."/>
            <person name="Tomb J.-F."/>
            <person name="Gordon M.P."/>
            <person name="Olson M.V."/>
            <person name="Nester E.W."/>
        </authorList>
    </citation>
    <scope>NUCLEOTIDE SEQUENCE [LARGE SCALE GENOMIC DNA]</scope>
    <source>
        <strain>C58 / ATCC 33970</strain>
    </source>
</reference>
<reference key="2">
    <citation type="journal article" date="2001" name="Science">
        <title>Genome sequence of the plant pathogen and biotechnology agent Agrobacterium tumefaciens C58.</title>
        <authorList>
            <person name="Goodner B."/>
            <person name="Hinkle G."/>
            <person name="Gattung S."/>
            <person name="Miller N."/>
            <person name="Blanchard M."/>
            <person name="Qurollo B."/>
            <person name="Goldman B.S."/>
            <person name="Cao Y."/>
            <person name="Askenazi M."/>
            <person name="Halling C."/>
            <person name="Mullin L."/>
            <person name="Houmiel K."/>
            <person name="Gordon J."/>
            <person name="Vaudin M."/>
            <person name="Iartchouk O."/>
            <person name="Epp A."/>
            <person name="Liu F."/>
            <person name="Wollam C."/>
            <person name="Allinger M."/>
            <person name="Doughty D."/>
            <person name="Scott C."/>
            <person name="Lappas C."/>
            <person name="Markelz B."/>
            <person name="Flanagan C."/>
            <person name="Crowell C."/>
            <person name="Gurson J."/>
            <person name="Lomo C."/>
            <person name="Sear C."/>
            <person name="Strub G."/>
            <person name="Cielo C."/>
            <person name="Slater S."/>
        </authorList>
    </citation>
    <scope>NUCLEOTIDE SEQUENCE [LARGE SCALE GENOMIC DNA]</scope>
    <source>
        <strain>C58 / ATCC 33970</strain>
    </source>
</reference>
<gene>
    <name evidence="1" type="primary">fluC</name>
    <name evidence="1" type="synonym">crcB</name>
    <name type="ordered locus">Atu1470</name>
    <name type="ORF">AGR_C_2712</name>
</gene>
<comment type="function">
    <text evidence="1">Fluoride-specific ion channel. Important for reducing fluoride concentration in the cell, thus reducing its toxicity.</text>
</comment>
<comment type="catalytic activity">
    <reaction evidence="1">
        <text>fluoride(in) = fluoride(out)</text>
        <dbReference type="Rhea" id="RHEA:76159"/>
        <dbReference type="ChEBI" id="CHEBI:17051"/>
    </reaction>
    <physiologicalReaction direction="left-to-right" evidence="1">
        <dbReference type="Rhea" id="RHEA:76160"/>
    </physiologicalReaction>
</comment>
<comment type="activity regulation">
    <text evidence="1">Na(+) is not transported, but it plays an essential structural role and its presence is essential for fluoride channel function.</text>
</comment>
<comment type="subcellular location">
    <subcellularLocation>
        <location evidence="1">Cell inner membrane</location>
        <topology evidence="1">Multi-pass membrane protein</topology>
    </subcellularLocation>
</comment>
<comment type="similarity">
    <text evidence="1">Belongs to the fluoride channel Fluc/FEX (TC 1.A.43) family.</text>
</comment>